<feature type="chain" id="PRO_0000445548" description="Intermembrane lipid transfer protein Vps13D">
    <location>
        <begin position="1"/>
        <end position="3919"/>
    </location>
</feature>
<feature type="domain" description="Chorein N-terminal" evidence="2">
    <location>
        <begin position="4"/>
        <end position="114"/>
    </location>
</feature>
<feature type="domain" description="UBA" evidence="3 5">
    <location>
        <begin position="2292"/>
        <end position="2334"/>
    </location>
</feature>
<feature type="domain" description="SHR-BD" evidence="2">
    <location>
        <begin position="2837"/>
        <end position="3113"/>
    </location>
</feature>
<feature type="region of interest" description="Disordered" evidence="4">
    <location>
        <begin position="706"/>
        <end position="736"/>
    </location>
</feature>
<feature type="region of interest" description="Disordered" evidence="4">
    <location>
        <begin position="3749"/>
        <end position="3768"/>
    </location>
</feature>
<feature type="compositionally biased region" description="Basic and acidic residues" evidence="4">
    <location>
        <begin position="3751"/>
        <end position="3764"/>
    </location>
</feature>
<feature type="mutagenesis site" description="Loss of 'Lys-63'-linked polyubiquitin chain binding." evidence="5">
    <original>F</original>
    <variation>A</variation>
    <location>
        <position position="2308"/>
    </location>
</feature>
<keyword id="KW-0963">Cytoplasm</keyword>
<keyword id="KW-0430">Lectin</keyword>
<keyword id="KW-0445">Lipid transport</keyword>
<keyword id="KW-0458">Lysosome</keyword>
<keyword id="KW-1185">Reference proteome</keyword>
<keyword id="KW-0813">Transport</keyword>
<name>VP13D_DROME</name>
<evidence type="ECO:0000250" key="1">
    <source>
        <dbReference type="UniProtKB" id="Q07878"/>
    </source>
</evidence>
<evidence type="ECO:0000255" key="2"/>
<evidence type="ECO:0000255" key="3">
    <source>
        <dbReference type="PROSITE-ProRule" id="PRU00212"/>
    </source>
</evidence>
<evidence type="ECO:0000256" key="4">
    <source>
        <dbReference type="SAM" id="MobiDB-lite"/>
    </source>
</evidence>
<evidence type="ECO:0000269" key="5">
    <source>
    </source>
</evidence>
<evidence type="ECO:0000269" key="6">
    <source>
    </source>
</evidence>
<evidence type="ECO:0000303" key="7">
    <source>
    </source>
</evidence>
<evidence type="ECO:0000305" key="8"/>
<evidence type="ECO:0000312" key="9">
    <source>
        <dbReference type="FlyBase" id="FBgn0052113"/>
    </source>
</evidence>
<evidence type="ECO:0000312" key="10">
    <source>
        <dbReference type="Proteomes" id="UP000000803"/>
    </source>
</evidence>
<organism evidence="10">
    <name type="scientific">Drosophila melanogaster</name>
    <name type="common">Fruit fly</name>
    <dbReference type="NCBI Taxonomy" id="7227"/>
    <lineage>
        <taxon>Eukaryota</taxon>
        <taxon>Metazoa</taxon>
        <taxon>Ecdysozoa</taxon>
        <taxon>Arthropoda</taxon>
        <taxon>Hexapoda</taxon>
        <taxon>Insecta</taxon>
        <taxon>Pterygota</taxon>
        <taxon>Neoptera</taxon>
        <taxon>Endopterygota</taxon>
        <taxon>Diptera</taxon>
        <taxon>Brachycera</taxon>
        <taxon>Muscomorpha</taxon>
        <taxon>Ephydroidea</taxon>
        <taxon>Drosophilidae</taxon>
        <taxon>Drosophila</taxon>
        <taxon>Sophophora</taxon>
    </lineage>
</organism>
<comment type="function">
    <text evidence="1 5">Mediates the transfer of lipids between membranes at organelle contact sites (By similarity). Functions in promoting mitochondrial clearance by mitochondrial autophagy (mitophagy), also possibly by positively regulating mitochondrial fission (PubMed:29307555). Mitophagy plays an important role in regulating cell health and mitochondrial size and homeostasis (PubMed:29307555).</text>
</comment>
<comment type="subcellular location">
    <subcellularLocation>
        <location evidence="5">Cytoplasm</location>
    </subcellularLocation>
    <subcellularLocation>
        <location evidence="5">Lysosome</location>
    </subcellularLocation>
</comment>
<comment type="tissue specificity">
    <text evidence="5">Expressed in intestinal cells (at protein level).</text>
</comment>
<comment type="domain">
    <text evidence="5">The UBA domain binds to 'Lys-63'-linked polyubiquitin chains, but neither to linear nor 'Lys-48'-linked polyubiquitin chains. Required for mitochondrial size regulation and for mitochondrial clearance in the intestine.</text>
</comment>
<comment type="disruption phenotype">
    <text evidence="5 6">RNAi-mediated knockdown leads to 100% lethality at the larval or pupal stage.</text>
</comment>
<comment type="similarity">
    <text evidence="8">Belongs to the VPS13 family.</text>
</comment>
<proteinExistence type="evidence at protein level"/>
<gene>
    <name evidence="9" type="primary">Vps13D</name>
    <name evidence="9" type="ORF">CG32113</name>
</gene>
<protein>
    <recommendedName>
        <fullName evidence="8">Intermembrane lipid transfer protein Vps13D</fullName>
    </recommendedName>
    <alternativeName>
        <fullName evidence="7">Vacuolar protein sorting-associated protein 13D</fullName>
    </alternativeName>
</protein>
<accession>Q9VU08</accession>
<dbReference type="EMBL" id="AE014296">
    <property type="protein sequence ID" value="AAF49887.3"/>
    <property type="molecule type" value="Genomic_DNA"/>
</dbReference>
<dbReference type="RefSeq" id="NP_729825.2">
    <property type="nucleotide sequence ID" value="NM_168512.4"/>
</dbReference>
<dbReference type="SMR" id="Q9VU08"/>
<dbReference type="FunCoup" id="Q9VU08">
    <property type="interactions" value="1031"/>
</dbReference>
<dbReference type="IntAct" id="Q9VU08">
    <property type="interactions" value="7"/>
</dbReference>
<dbReference type="STRING" id="7227.FBpp0271898"/>
<dbReference type="GlyGen" id="Q9VU08">
    <property type="glycosylation" value="1 site"/>
</dbReference>
<dbReference type="PaxDb" id="7227-FBpp0271898"/>
<dbReference type="EnsemblMetazoa" id="FBtr0273390">
    <property type="protein sequence ID" value="FBpp0271898"/>
    <property type="gene ID" value="FBgn0052113"/>
</dbReference>
<dbReference type="GeneID" id="39448"/>
<dbReference type="KEGG" id="dme:Dmel_CG32113"/>
<dbReference type="UCSC" id="CG32113-RB">
    <property type="organism name" value="d. melanogaster"/>
</dbReference>
<dbReference type="AGR" id="FB:FBgn0052113"/>
<dbReference type="CTD" id="55187"/>
<dbReference type="FlyBase" id="FBgn0052113">
    <property type="gene designation" value="Vps13D"/>
</dbReference>
<dbReference type="VEuPathDB" id="VectorBase:FBgn0052113"/>
<dbReference type="eggNOG" id="KOG1796">
    <property type="taxonomic scope" value="Eukaryota"/>
</dbReference>
<dbReference type="GeneTree" id="ENSGT00950000183083"/>
<dbReference type="HOGENOM" id="CLU_000131_0_0_1"/>
<dbReference type="InParanoid" id="Q9VU08"/>
<dbReference type="OMA" id="IEFVMDQ"/>
<dbReference type="OrthoDB" id="272810at2759"/>
<dbReference type="PhylomeDB" id="Q9VU08"/>
<dbReference type="SignaLink" id="Q9VU08"/>
<dbReference type="BioGRID-ORCS" id="39448">
    <property type="hits" value="0 hits in 1 CRISPR screen"/>
</dbReference>
<dbReference type="ChiTaRS" id="CG32113">
    <property type="organism name" value="fly"/>
</dbReference>
<dbReference type="GenomeRNAi" id="39448"/>
<dbReference type="PRO" id="PR:Q9VU08"/>
<dbReference type="Proteomes" id="UP000000803">
    <property type="component" value="Chromosome 3L"/>
</dbReference>
<dbReference type="Bgee" id="FBgn0052113">
    <property type="expression patterns" value="Expressed in indirect flight muscle cell (Drosophila) in body wall and 127 other cell types or tissues"/>
</dbReference>
<dbReference type="GO" id="GO:0005764">
    <property type="term" value="C:lysosome"/>
    <property type="evidence" value="ECO:0000314"/>
    <property type="project" value="FlyBase"/>
</dbReference>
<dbReference type="GO" id="GO:0030246">
    <property type="term" value="F:carbohydrate binding"/>
    <property type="evidence" value="ECO:0007669"/>
    <property type="project" value="UniProtKB-KW"/>
</dbReference>
<dbReference type="GO" id="GO:0070530">
    <property type="term" value="F:K63-linked polyubiquitin modification-dependent protein binding"/>
    <property type="evidence" value="ECO:0000314"/>
    <property type="project" value="UniProtKB"/>
</dbReference>
<dbReference type="GO" id="GO:0043130">
    <property type="term" value="F:ubiquitin binding"/>
    <property type="evidence" value="ECO:0000314"/>
    <property type="project" value="UniProtKB"/>
</dbReference>
<dbReference type="GO" id="GO:0006869">
    <property type="term" value="P:lipid transport"/>
    <property type="evidence" value="ECO:0007669"/>
    <property type="project" value="UniProtKB-KW"/>
</dbReference>
<dbReference type="GO" id="GO:0007005">
    <property type="term" value="P:mitochondrion organization"/>
    <property type="evidence" value="ECO:0000315"/>
    <property type="project" value="UniProtKB"/>
</dbReference>
<dbReference type="GO" id="GO:0000423">
    <property type="term" value="P:mitophagy"/>
    <property type="evidence" value="ECO:0000315"/>
    <property type="project" value="UniProtKB"/>
</dbReference>
<dbReference type="GO" id="GO:0045053">
    <property type="term" value="P:protein retention in Golgi apparatus"/>
    <property type="evidence" value="ECO:0000318"/>
    <property type="project" value="GO_Central"/>
</dbReference>
<dbReference type="GO" id="GO:0006623">
    <property type="term" value="P:protein targeting to vacuole"/>
    <property type="evidence" value="ECO:0000318"/>
    <property type="project" value="GO_Central"/>
</dbReference>
<dbReference type="GO" id="GO:0061709">
    <property type="term" value="P:reticulophagy"/>
    <property type="evidence" value="ECO:0000315"/>
    <property type="project" value="FlyBase"/>
</dbReference>
<dbReference type="CDD" id="cd23453">
    <property type="entry name" value="beta-trefoil_Ricin_VPS13D"/>
    <property type="match status" value="1"/>
</dbReference>
<dbReference type="CDD" id="cd14306">
    <property type="entry name" value="UBA_VP13D"/>
    <property type="match status" value="1"/>
</dbReference>
<dbReference type="InterPro" id="IPR041969">
    <property type="entry name" value="VP13D_UBA"/>
</dbReference>
<dbReference type="InterPro" id="IPR026847">
    <property type="entry name" value="VPS13"/>
</dbReference>
<dbReference type="InterPro" id="IPR056747">
    <property type="entry name" value="VPS13-like_M"/>
</dbReference>
<dbReference type="InterPro" id="IPR026854">
    <property type="entry name" value="VPS13_N"/>
</dbReference>
<dbReference type="InterPro" id="IPR009543">
    <property type="entry name" value="VPS13_VAB"/>
</dbReference>
<dbReference type="PANTHER" id="PTHR16166:SF141">
    <property type="entry name" value="INTERMEMBRANE LIPID TRANSFER PROTEIN VPS13D"/>
    <property type="match status" value="1"/>
</dbReference>
<dbReference type="PANTHER" id="PTHR16166">
    <property type="entry name" value="VACUOLAR PROTEIN SORTING-ASSOCIATED PROTEIN VPS13"/>
    <property type="match status" value="1"/>
</dbReference>
<dbReference type="Pfam" id="PF25033">
    <property type="entry name" value="VPS13_M"/>
    <property type="match status" value="1"/>
</dbReference>
<dbReference type="Pfam" id="PF12624">
    <property type="entry name" value="VPS13_N"/>
    <property type="match status" value="1"/>
</dbReference>
<dbReference type="Pfam" id="PF25036">
    <property type="entry name" value="VPS13_VAB"/>
    <property type="match status" value="1"/>
</dbReference>
<sequence>MLRDLITWVLNTYLGKYLENLNSAQLSVALLSGEVELENIPIRKDALRSFNLPVEVTAGSIRKIKLQIPVRQFRTSPWCISIEGLFCIICPKNLDNWDYEKEKLQDLEYKLAVLDTAEAGWRSEKGKQMESYYFSSYNNWLKYGTNMATNIIDNIELKISDVHFRFEDIVDTGKSKICTGIKIGSLTAQSCDCDWTNGSYKMNNNEMNYKLVELKELSVYWDLLHEDIKCQSYSNQEILEKMHSTCELRSHNFIIKPICATARWKRDKCQQVIRTKDKPRVSCELLVPEVVIDISKVQRLQMLDKLSEIRQVKEVRQYRLKRPTCTVESNPIAWWKYATICHGFDFKKNEEKWLMLKENLRYMLLYKSIILNPNENLSAADKEFKAYIESDRKISDLTIMRRICFEKVFTKGFAFESQNEQGKNMLFHWFPNWMGWYANSPSTPNNEQDESLKHLEDDILVALENSLQNSSDLKSDAVFGHFSIKLLKGLVILQTEDKLNDGRNKSMEMQFNNFSAYLQLSPQLTSYTVGISLQEVYLIDKTSSDTMHNYLIKPQTGNTATPNQLVKNAALQEDILFQLQYENCNHLRFQLNIKSKGLDLIYNEDAIQWLLDFLADSNSFKYSPRNRVAKKTDFMKNWNEMFSGNEVNRKIWMFEIEIFAPRIIFLENYKVSNSLMVLLDFGKLEMRKMEVKRVIPVIESAVTENTSDDDETYLTPCSTPPASEKSGSESPTLLENPKTESFLNKNVQLEYVLHNKIYDKYLINFTNLQVLVCKYEERWQACLKTSSNFHLIDKFNINLTLEQRNIFTVDPEYPSFMLFGTCPTILIHGNEELINNCCNIMKPIIKASKEMENIYRGGNTIYASERIKNLAEDDRSRVVIEFVMDQLVIEMQSTERSIAELQIIGARAGLTKEPHETNISMSVHGLLLVDAIQSFGPDFELLVASHRHVGMDSLSGSLKHSAIVSPTSPGSPNFFDRATSPHMITKAVQNIKMGDRSTEFCDDEDSTALISVDIKIVPPNESNSMQLHTTSITFNSLDIIANQDTIIEILNFAKRTLLAQNIFPSESPESPKEATEAPVDVVDQVDHKSHNEIFFDFFRLNILLLYTIKRDKFNVGRKVGTVTLTEAKINASFQSDLSIIGSLGGIQVIDITSEAFCHPRILSVGRDQILRASDTNKQTVLSQLSNEIYSNNYNEETKSDESDAISFQSHWSDKTTCTFQMRMASASYTHCPRFLRDVNACITYFKRSLREFATSIGNKATDMAKEFVQQVRAVEQIGPVYPQRNRQDNWLDIIISSPIIILPISNTSTNVLIANLGKISCSNAVKCDSDEFNESYTIEIKNTYVYSLNIDEGEYSFNVHPAKNKDAIPILHDTAITLQLYAGYSDDNDEDKQLNRFSIKGSMVEALKVSLNRKQYELLLESIRYATNFSNEVLNESDELDQNGDIEPTANIDAESIISTTIQFSVPVFQINLQNEYHNDLINLTFKNFNVKHISKGFDKDVEVVLKSVLMEDLKSDLTSPFRNMVTSVDLEQKIKKNEMTSSSCPDLPSYCNSLKNRSSSVPSCFYNHMQVKVFGGDQKYTSSNKNELGKKKESQTLVIYKSHTGRSAQNGKLEQTSSIQFNCLNLAICVERWYTIFDFFGLVSVDNVNEKYPEEMKLVEKHIDKVCSKLKVSIRSFNFTLIRNESLLSRVNVSNAVFMILQDPYSKIVEGCLGSVSVNDLTKYGNIYKQKFLTSGTEALNFVYKKKLVDLEALNTLDTDSTLRINMSAVHYIHTKRFSTELHVFVKDLLQLQTPVIRKLKKHGSEQNMRPSKMKLVIQADSPVIVLPSSYNRNEVIIAYLGQFSLKNSFHFASDNNIISKMSATPSKDEILDVMRIDLVNINLFSGERSSMKAKADQEKDRIIIADMNFLRLGQPFFNESCFLHLQLERNLSADAHRVCPDISVQGTFSKLSGIINIQQYKLIRSFLNNNIGEQTDDIYMNYHNNSCTSIERLSTINLMPKNEVSKIVSILISIRILLEDVSLLLALNTSQSAAIEPLACIHFLKSTLEIDLFSDGSQDIDLISSNILIVDERNESDKSNENVFKNILEPSKKEVRIENSVQVEVHCRKKATFSKYTIMLNNMRVFALLSFLDQLKSYLQEDSPAPVVNNAANQIAQKPQIDTSISTEYVVNITDSEIIFAEECSRLDSNAIILKSTTVICYKPNSNIVPLSLDINHLEIFSCTLDAEEESALSIIDPFTLIIELRSNCLNILIQKHLNIRLSYVDVKLFSRMARLLPTQTSRPKNVISKADSDLEKAAPLVAMGFEISDCLYAMQINNWRINDAAIWLSQQKQNTYRNPALEMKTAVVDASLISVFIIDDCMDADVPLLEVSLSKFLLNFTFQTQDPNPKETNIRHYSLGNIDTEVSVNYYNRRLSGWEPVAETWESNLNWKYTKGHLDNKKRFEIGISSKQMLKLNVTSTFIELFHMVLKNWTNDFNDNGAKNFRQRSPFIPFALQNLSGTPLLFKPIYAPLGDLTRSDLQQVELIKNWYSVQPNETKTFDFSQKSKLRHVHSHQLNLHQIFVQIHGWTLIGPISVDKVGMFFRTTKLDSQFLTKSRIVFDISLIGSAQKLIKVKSSLGVINKLDRNVFLKMTLKGTHSDGLSSISVIKPNDELSVPLKFIDASLYVAHNTSESDAYEDTGFSNEEILWKACGKDDTRQLLAGYDTNKSILYTFVNISREIYHCKEQNLPGHKITLLPPLKINNMLCCDLMFKIHEHATGRINSSESVNIYNVNICQPLNLSITLDNFQLSGQLKIPVSHRGVIEPKLKLIDIQKRELHVRVSIQSVPGKGMELYISAPVWIINKTGLPLIYKQEGTSHTAAGQFEEHETARQVAPLMFSFSDQEGSPALVLRLGKAYGSNNMWCKSFSTHKDLADRDLRAENTKGSYAIGISVRRGRGLYACTTFVTLSPRFHLHNRSGYKLEFMQLCDIVNYDRPDPRKIISAPVDCNFAFHWPNWDQEQIICVRIPEIECCCWSKGIPIKDVQSLYINVRNEWGEMFFLRLEIISKDATFILLFTDARTLPPPIRIDNCSEVVINFSQLRSKPVWITPVRPQSSLSYVMDDPLGQQILLMEAPGGNMIEFPINNKNNIKKTLTYTNFIYIAFQGTFERSNEEENTHRQLVLGVRGKKVVIVEKNSGDRSQLWLMNSNGQLEHEGSTPPIQTNDANAVRLVLDLEKAPNPMEFTNLVVRTPNKQRVTTQTWRFENGRLMCHANMCVQSRFGESGLKPNYEAVVGRTENRASSSKQIPIGQHIVAQKLRPGSGQLELSTKMDGPISTIEICDIKIKQNSVFLTPDLLWMHASLNNRQITDKGKVSFVHEYLINVELVKGIGISIIARKPCEEIMFISLDHINCDIVQSALENSLDLNIAYIQIDNQLLDAVSPIALHTQTSNDLEETQNAVVLKLKMLPSPNKNAIIFKYLTLDLKPSTASLEEKLILKVASFLGYGKINRQNLSVQYQFENTDDKPFLQDMKRYYFENLSIGATQVRLSAFTSSKLPVELHETKKALGLTLIKFEDALIELDRYSDKLHFETMDVYRKELKKHYINQVKWHAAAILGSVDFLGNPLGFANDLSEGVSGLIFEGSVKSLVKNVTHGISNSTAKLTETLSDSLGKVVLDDHDNETRQRILELQSNTSGGHLAAGLKGLGFGLLGGVTSIVRHTYDGATSDGVPGFLSGLGKGLVGTVTKPIIGVLDLASETASAVRETSRDSHRNAPERKRLPRCVTGAPGGLLPLYSNRQSKGQQYLYLINQKNFSEKIISYEPNLWSDKEARLRLLVSTEYVRIFSLSDANPTIMFECHVSEILSCHPVVTNAGTTPTTSSRASASHYIEISTNLPKITRPRIRCRSEECAEAASRCINYAKSVFDEREHAVL</sequence>
<reference evidence="10" key="1">
    <citation type="journal article" date="2000" name="Science">
        <title>The genome sequence of Drosophila melanogaster.</title>
        <authorList>
            <person name="Adams M.D."/>
            <person name="Celniker S.E."/>
            <person name="Holt R.A."/>
            <person name="Evans C.A."/>
            <person name="Gocayne J.D."/>
            <person name="Amanatides P.G."/>
            <person name="Scherer S.E."/>
            <person name="Li P.W."/>
            <person name="Hoskins R.A."/>
            <person name="Galle R.F."/>
            <person name="George R.A."/>
            <person name="Lewis S.E."/>
            <person name="Richards S."/>
            <person name="Ashburner M."/>
            <person name="Henderson S.N."/>
            <person name="Sutton G.G."/>
            <person name="Wortman J.R."/>
            <person name="Yandell M.D."/>
            <person name="Zhang Q."/>
            <person name="Chen L.X."/>
            <person name="Brandon R.C."/>
            <person name="Rogers Y.-H.C."/>
            <person name="Blazej R.G."/>
            <person name="Champe M."/>
            <person name="Pfeiffer B.D."/>
            <person name="Wan K.H."/>
            <person name="Doyle C."/>
            <person name="Baxter E.G."/>
            <person name="Helt G."/>
            <person name="Nelson C.R."/>
            <person name="Miklos G.L.G."/>
            <person name="Abril J.F."/>
            <person name="Agbayani A."/>
            <person name="An H.-J."/>
            <person name="Andrews-Pfannkoch C."/>
            <person name="Baldwin D."/>
            <person name="Ballew R.M."/>
            <person name="Basu A."/>
            <person name="Baxendale J."/>
            <person name="Bayraktaroglu L."/>
            <person name="Beasley E.M."/>
            <person name="Beeson K.Y."/>
            <person name="Benos P.V."/>
            <person name="Berman B.P."/>
            <person name="Bhandari D."/>
            <person name="Bolshakov S."/>
            <person name="Borkova D."/>
            <person name="Botchan M.R."/>
            <person name="Bouck J."/>
            <person name="Brokstein P."/>
            <person name="Brottier P."/>
            <person name="Burtis K.C."/>
            <person name="Busam D.A."/>
            <person name="Butler H."/>
            <person name="Cadieu E."/>
            <person name="Center A."/>
            <person name="Chandra I."/>
            <person name="Cherry J.M."/>
            <person name="Cawley S."/>
            <person name="Dahlke C."/>
            <person name="Davenport L.B."/>
            <person name="Davies P."/>
            <person name="de Pablos B."/>
            <person name="Delcher A."/>
            <person name="Deng Z."/>
            <person name="Mays A.D."/>
            <person name="Dew I."/>
            <person name="Dietz S.M."/>
            <person name="Dodson K."/>
            <person name="Doup L.E."/>
            <person name="Downes M."/>
            <person name="Dugan-Rocha S."/>
            <person name="Dunkov B.C."/>
            <person name="Dunn P."/>
            <person name="Durbin K.J."/>
            <person name="Evangelista C.C."/>
            <person name="Ferraz C."/>
            <person name="Ferriera S."/>
            <person name="Fleischmann W."/>
            <person name="Fosler C."/>
            <person name="Gabrielian A.E."/>
            <person name="Garg N.S."/>
            <person name="Gelbart W.M."/>
            <person name="Glasser K."/>
            <person name="Glodek A."/>
            <person name="Gong F."/>
            <person name="Gorrell J.H."/>
            <person name="Gu Z."/>
            <person name="Guan P."/>
            <person name="Harris M."/>
            <person name="Harris N.L."/>
            <person name="Harvey D.A."/>
            <person name="Heiman T.J."/>
            <person name="Hernandez J.R."/>
            <person name="Houck J."/>
            <person name="Hostin D."/>
            <person name="Houston K.A."/>
            <person name="Howland T.J."/>
            <person name="Wei M.-H."/>
            <person name="Ibegwam C."/>
            <person name="Jalali M."/>
            <person name="Kalush F."/>
            <person name="Karpen G.H."/>
            <person name="Ke Z."/>
            <person name="Kennison J.A."/>
            <person name="Ketchum K.A."/>
            <person name="Kimmel B.E."/>
            <person name="Kodira C.D."/>
            <person name="Kraft C.L."/>
            <person name="Kravitz S."/>
            <person name="Kulp D."/>
            <person name="Lai Z."/>
            <person name="Lasko P."/>
            <person name="Lei Y."/>
            <person name="Levitsky A.A."/>
            <person name="Li J.H."/>
            <person name="Li Z."/>
            <person name="Liang Y."/>
            <person name="Lin X."/>
            <person name="Liu X."/>
            <person name="Mattei B."/>
            <person name="McIntosh T.C."/>
            <person name="McLeod M.P."/>
            <person name="McPherson D."/>
            <person name="Merkulov G."/>
            <person name="Milshina N.V."/>
            <person name="Mobarry C."/>
            <person name="Morris J."/>
            <person name="Moshrefi A."/>
            <person name="Mount S.M."/>
            <person name="Moy M."/>
            <person name="Murphy B."/>
            <person name="Murphy L."/>
            <person name="Muzny D.M."/>
            <person name="Nelson D.L."/>
            <person name="Nelson D.R."/>
            <person name="Nelson K.A."/>
            <person name="Nixon K."/>
            <person name="Nusskern D.R."/>
            <person name="Pacleb J.M."/>
            <person name="Palazzolo M."/>
            <person name="Pittman G.S."/>
            <person name="Pan S."/>
            <person name="Pollard J."/>
            <person name="Puri V."/>
            <person name="Reese M.G."/>
            <person name="Reinert K."/>
            <person name="Remington K."/>
            <person name="Saunders R.D.C."/>
            <person name="Scheeler F."/>
            <person name="Shen H."/>
            <person name="Shue B.C."/>
            <person name="Siden-Kiamos I."/>
            <person name="Simpson M."/>
            <person name="Skupski M.P."/>
            <person name="Smith T.J."/>
            <person name="Spier E."/>
            <person name="Spradling A.C."/>
            <person name="Stapleton M."/>
            <person name="Strong R."/>
            <person name="Sun E."/>
            <person name="Svirskas R."/>
            <person name="Tector C."/>
            <person name="Turner R."/>
            <person name="Venter E."/>
            <person name="Wang A.H."/>
            <person name="Wang X."/>
            <person name="Wang Z.-Y."/>
            <person name="Wassarman D.A."/>
            <person name="Weinstock G.M."/>
            <person name="Weissenbach J."/>
            <person name="Williams S.M."/>
            <person name="Woodage T."/>
            <person name="Worley K.C."/>
            <person name="Wu D."/>
            <person name="Yang S."/>
            <person name="Yao Q.A."/>
            <person name="Ye J."/>
            <person name="Yeh R.-F."/>
            <person name="Zaveri J.S."/>
            <person name="Zhan M."/>
            <person name="Zhang G."/>
            <person name="Zhao Q."/>
            <person name="Zheng L."/>
            <person name="Zheng X.H."/>
            <person name="Zhong F.N."/>
            <person name="Zhong W."/>
            <person name="Zhou X."/>
            <person name="Zhu S.C."/>
            <person name="Zhu X."/>
            <person name="Smith H.O."/>
            <person name="Gibbs R.A."/>
            <person name="Myers E.W."/>
            <person name="Rubin G.M."/>
            <person name="Venter J.C."/>
        </authorList>
    </citation>
    <scope>NUCLEOTIDE SEQUENCE [LARGE SCALE GENOMIC DNA]</scope>
    <source>
        <strain evidence="10">Berkeley</strain>
    </source>
</reference>
<reference evidence="10" key="2">
    <citation type="journal article" date="2002" name="Genome Biol.">
        <title>Annotation of the Drosophila melanogaster euchromatic genome: a systematic review.</title>
        <authorList>
            <person name="Misra S."/>
            <person name="Crosby M.A."/>
            <person name="Mungall C.J."/>
            <person name="Matthews B.B."/>
            <person name="Campbell K.S."/>
            <person name="Hradecky P."/>
            <person name="Huang Y."/>
            <person name="Kaminker J.S."/>
            <person name="Millburn G.H."/>
            <person name="Prochnik S.E."/>
            <person name="Smith C.D."/>
            <person name="Tupy J.L."/>
            <person name="Whitfield E.J."/>
            <person name="Bayraktaroglu L."/>
            <person name="Berman B.P."/>
            <person name="Bettencourt B.R."/>
            <person name="Celniker S.E."/>
            <person name="de Grey A.D.N.J."/>
            <person name="Drysdale R.A."/>
            <person name="Harris N.L."/>
            <person name="Richter J."/>
            <person name="Russo S."/>
            <person name="Schroeder A.J."/>
            <person name="Shu S.Q."/>
            <person name="Stapleton M."/>
            <person name="Yamada C."/>
            <person name="Ashburner M."/>
            <person name="Gelbart W.M."/>
            <person name="Rubin G.M."/>
            <person name="Lewis S.E."/>
        </authorList>
    </citation>
    <scope>GENOME REANNOTATION</scope>
    <source>
        <strain evidence="10">Berkeley</strain>
    </source>
</reference>
<reference key="3">
    <citation type="journal article" date="2018" name="Ann. Neurol.">
        <title>Mutations in VPS13D lead to a new recessive ataxia with spasticity and mitochondrial defects.</title>
        <authorList>
            <person name="Seong E."/>
            <person name="Insolera R."/>
            <person name="Dulovic M."/>
            <person name="Kamsteeg E.J."/>
            <person name="Trinh J."/>
            <person name="Brueggemann N."/>
            <person name="Sandford E."/>
            <person name="Li S."/>
            <person name="Ozel A.B."/>
            <person name="Li J.Z."/>
            <person name="Jewett T."/>
            <person name="Kievit A.J.A."/>
            <person name="Muenchau A."/>
            <person name="Shakkottai V."/>
            <person name="Klein C."/>
            <person name="Collins C.A."/>
            <person name="Lohmann K."/>
            <person name="van de Warrenburg B.P."/>
            <person name="Burmeister M."/>
        </authorList>
    </citation>
    <scope>DISRUPTION PHENOTYPE</scope>
</reference>
<reference evidence="8" key="4">
    <citation type="journal article" date="2018" name="Curr. Biol.">
        <title>Vps13D Encodes a Ubiquitin-Binding Protein that Is Required for the Regulation of Mitochondrial Size and Clearance.</title>
        <authorList>
            <person name="Anding A.L."/>
            <person name="Wang C."/>
            <person name="Chang T.K."/>
            <person name="Sliter D.A."/>
            <person name="Powers C.M."/>
            <person name="Hofmann K."/>
            <person name="Youle R.J."/>
            <person name="Baehrecke E.H."/>
        </authorList>
    </citation>
    <scope>FUNCTION</scope>
    <scope>SUBCELLULAR LOCATION</scope>
    <scope>TISSUE SPECIFICITY</scope>
    <scope>DOMAIN</scope>
    <scope>DISRUPTION PHENOTYPE</scope>
    <scope>MUTAGENESIS OF PHE-2308</scope>
</reference>